<keyword id="KW-0687">Ribonucleoprotein</keyword>
<keyword id="KW-0689">Ribosomal protein</keyword>
<reference key="1">
    <citation type="submission" date="2007-05" db="EMBL/GenBank/DDBJ databases">
        <title>Complete sequence of Pseudomonas putida F1.</title>
        <authorList>
            <consortium name="US DOE Joint Genome Institute"/>
            <person name="Copeland A."/>
            <person name="Lucas S."/>
            <person name="Lapidus A."/>
            <person name="Barry K."/>
            <person name="Detter J.C."/>
            <person name="Glavina del Rio T."/>
            <person name="Hammon N."/>
            <person name="Israni S."/>
            <person name="Dalin E."/>
            <person name="Tice H."/>
            <person name="Pitluck S."/>
            <person name="Chain P."/>
            <person name="Malfatti S."/>
            <person name="Shin M."/>
            <person name="Vergez L."/>
            <person name="Schmutz J."/>
            <person name="Larimer F."/>
            <person name="Land M."/>
            <person name="Hauser L."/>
            <person name="Kyrpides N."/>
            <person name="Lykidis A."/>
            <person name="Parales R."/>
            <person name="Richardson P."/>
        </authorList>
    </citation>
    <scope>NUCLEOTIDE SEQUENCE [LARGE SCALE GENOMIC DNA]</scope>
    <source>
        <strain>ATCC 700007 / DSM 6899 / JCM 31910 / BCRC 17059 / LMG 24140 / F1</strain>
    </source>
</reference>
<comment type="similarity">
    <text evidence="1">Belongs to the bacterial ribosomal protein bS16 family.</text>
</comment>
<organism>
    <name type="scientific">Pseudomonas putida (strain ATCC 700007 / DSM 6899 / JCM 31910 / BCRC 17059 / LMG 24140 / F1)</name>
    <dbReference type="NCBI Taxonomy" id="351746"/>
    <lineage>
        <taxon>Bacteria</taxon>
        <taxon>Pseudomonadati</taxon>
        <taxon>Pseudomonadota</taxon>
        <taxon>Gammaproteobacteria</taxon>
        <taxon>Pseudomonadales</taxon>
        <taxon>Pseudomonadaceae</taxon>
        <taxon>Pseudomonas</taxon>
    </lineage>
</organism>
<gene>
    <name evidence="1" type="primary">rpsP</name>
    <name type="ordered locus">Pput_4259</name>
</gene>
<evidence type="ECO:0000255" key="1">
    <source>
        <dbReference type="HAMAP-Rule" id="MF_00385"/>
    </source>
</evidence>
<evidence type="ECO:0000305" key="2"/>
<dbReference type="EMBL" id="CP000712">
    <property type="protein sequence ID" value="ABQ80383.1"/>
    <property type="molecule type" value="Genomic_DNA"/>
</dbReference>
<dbReference type="SMR" id="A5W8C3"/>
<dbReference type="KEGG" id="ppf:Pput_4259"/>
<dbReference type="eggNOG" id="COG0228">
    <property type="taxonomic scope" value="Bacteria"/>
</dbReference>
<dbReference type="HOGENOM" id="CLU_100590_5_1_6"/>
<dbReference type="GO" id="GO:0005737">
    <property type="term" value="C:cytoplasm"/>
    <property type="evidence" value="ECO:0007669"/>
    <property type="project" value="UniProtKB-ARBA"/>
</dbReference>
<dbReference type="GO" id="GO:0015935">
    <property type="term" value="C:small ribosomal subunit"/>
    <property type="evidence" value="ECO:0007669"/>
    <property type="project" value="TreeGrafter"/>
</dbReference>
<dbReference type="GO" id="GO:0003735">
    <property type="term" value="F:structural constituent of ribosome"/>
    <property type="evidence" value="ECO:0007669"/>
    <property type="project" value="InterPro"/>
</dbReference>
<dbReference type="GO" id="GO:0006412">
    <property type="term" value="P:translation"/>
    <property type="evidence" value="ECO:0007669"/>
    <property type="project" value="UniProtKB-UniRule"/>
</dbReference>
<dbReference type="FunFam" id="3.30.1320.10:FF:000001">
    <property type="entry name" value="30S ribosomal protein S16"/>
    <property type="match status" value="1"/>
</dbReference>
<dbReference type="Gene3D" id="3.30.1320.10">
    <property type="match status" value="1"/>
</dbReference>
<dbReference type="HAMAP" id="MF_00385">
    <property type="entry name" value="Ribosomal_bS16"/>
    <property type="match status" value="1"/>
</dbReference>
<dbReference type="InterPro" id="IPR000307">
    <property type="entry name" value="Ribosomal_bS16"/>
</dbReference>
<dbReference type="InterPro" id="IPR023803">
    <property type="entry name" value="Ribosomal_bS16_dom_sf"/>
</dbReference>
<dbReference type="NCBIfam" id="TIGR00002">
    <property type="entry name" value="S16"/>
    <property type="match status" value="1"/>
</dbReference>
<dbReference type="PANTHER" id="PTHR12919">
    <property type="entry name" value="30S RIBOSOMAL PROTEIN S16"/>
    <property type="match status" value="1"/>
</dbReference>
<dbReference type="PANTHER" id="PTHR12919:SF20">
    <property type="entry name" value="SMALL RIBOSOMAL SUBUNIT PROTEIN BS16M"/>
    <property type="match status" value="1"/>
</dbReference>
<dbReference type="Pfam" id="PF00886">
    <property type="entry name" value="Ribosomal_S16"/>
    <property type="match status" value="1"/>
</dbReference>
<dbReference type="SUPFAM" id="SSF54565">
    <property type="entry name" value="Ribosomal protein S16"/>
    <property type="match status" value="1"/>
</dbReference>
<accession>A5W8C3</accession>
<proteinExistence type="inferred from homology"/>
<sequence>MVTIRLARGGSKKRPFYHLTVTNSRNARDGRFVERVGFFNPIAAGAEVKLSVNQERVTYWLSQGAQPSERVAQLLKEAAKAAA</sequence>
<protein>
    <recommendedName>
        <fullName evidence="1">Small ribosomal subunit protein bS16</fullName>
    </recommendedName>
    <alternativeName>
        <fullName evidence="2">30S ribosomal protein S16</fullName>
    </alternativeName>
</protein>
<name>RS16_PSEP1</name>
<feature type="chain" id="PRO_1000049323" description="Small ribosomal subunit protein bS16">
    <location>
        <begin position="1"/>
        <end position="83"/>
    </location>
</feature>